<proteinExistence type="inferred from homology"/>
<keyword id="KW-0574">Periplasm</keyword>
<keyword id="KW-0732">Signal</keyword>
<comment type="subcellular location">
    <subcellularLocation>
        <location evidence="1">Periplasm</location>
    </subcellularLocation>
</comment>
<comment type="similarity">
    <text evidence="1">Belongs to the UPF0312 family. Type 1 subfamily.</text>
</comment>
<feature type="signal peptide" evidence="1">
    <location>
        <begin position="1"/>
        <end position="23"/>
    </location>
</feature>
<feature type="chain" id="PRO_5000315786" description="UPF0312 protein YPK_1931">
    <location>
        <begin position="24"/>
        <end position="192"/>
    </location>
</feature>
<organism>
    <name type="scientific">Yersinia pseudotuberculosis serotype O:3 (strain YPIII)</name>
    <dbReference type="NCBI Taxonomy" id="502800"/>
    <lineage>
        <taxon>Bacteria</taxon>
        <taxon>Pseudomonadati</taxon>
        <taxon>Pseudomonadota</taxon>
        <taxon>Gammaproteobacteria</taxon>
        <taxon>Enterobacterales</taxon>
        <taxon>Yersiniaceae</taxon>
        <taxon>Yersinia</taxon>
    </lineage>
</organism>
<gene>
    <name type="ordered locus">YPK_1931</name>
</gene>
<protein>
    <recommendedName>
        <fullName evidence="1">UPF0312 protein YPK_1931</fullName>
    </recommendedName>
</protein>
<dbReference type="EMBL" id="CP000950">
    <property type="protein sequence ID" value="ACA68222.1"/>
    <property type="molecule type" value="Genomic_DNA"/>
</dbReference>
<dbReference type="RefSeq" id="WP_002211011.1">
    <property type="nucleotide sequence ID" value="NZ_CP009792.1"/>
</dbReference>
<dbReference type="SMR" id="B1JJW1"/>
<dbReference type="KEGG" id="ypy:YPK_1931"/>
<dbReference type="PATRIC" id="fig|502800.11.peg.2602"/>
<dbReference type="GO" id="GO:0042597">
    <property type="term" value="C:periplasmic space"/>
    <property type="evidence" value="ECO:0007669"/>
    <property type="project" value="UniProtKB-SubCell"/>
</dbReference>
<dbReference type="Gene3D" id="2.40.128.110">
    <property type="entry name" value="Lipid/polyisoprenoid-binding, YceI-like"/>
    <property type="match status" value="1"/>
</dbReference>
<dbReference type="HAMAP" id="MF_00780">
    <property type="entry name" value="UPF0312"/>
    <property type="match status" value="1"/>
</dbReference>
<dbReference type="InterPro" id="IPR007372">
    <property type="entry name" value="Lipid/polyisoprenoid-bd_YceI"/>
</dbReference>
<dbReference type="InterPro" id="IPR036761">
    <property type="entry name" value="TTHA0802/YceI-like_sf"/>
</dbReference>
<dbReference type="InterPro" id="IPR023480">
    <property type="entry name" value="UPF0312/YceI"/>
</dbReference>
<dbReference type="NCBIfam" id="NF002994">
    <property type="entry name" value="PRK03757.1"/>
    <property type="match status" value="1"/>
</dbReference>
<dbReference type="PANTHER" id="PTHR34406">
    <property type="entry name" value="PROTEIN YCEI"/>
    <property type="match status" value="1"/>
</dbReference>
<dbReference type="PANTHER" id="PTHR34406:SF1">
    <property type="entry name" value="PROTEIN YCEI"/>
    <property type="match status" value="1"/>
</dbReference>
<dbReference type="Pfam" id="PF04264">
    <property type="entry name" value="YceI"/>
    <property type="match status" value="1"/>
</dbReference>
<dbReference type="SMART" id="SM00867">
    <property type="entry name" value="YceI"/>
    <property type="match status" value="1"/>
</dbReference>
<dbReference type="SUPFAM" id="SSF101874">
    <property type="entry name" value="YceI-like"/>
    <property type="match status" value="1"/>
</dbReference>
<sequence length="192" mass="20909">MINKTLLGLSLGALMFTAGSAVAADYKIDKEGQHAFIEFRIKHLGYSWLYGSFNDFDGSFTFDDKNPAADKVNVVINTNSVDTNHAERDKHLRGKSFLNVAKFPQATFESTEVKKNGDGYSVIGNLTLNGVTKPVTLESKLTGQGNDPWGGYRAGFEANGNIKLKDFNITTDLGPASQEVELILSVEGVQVK</sequence>
<name>Y1931_YERPY</name>
<reference key="1">
    <citation type="submission" date="2008-02" db="EMBL/GenBank/DDBJ databases">
        <title>Complete sequence of Yersinia pseudotuberculosis YPIII.</title>
        <authorList>
            <consortium name="US DOE Joint Genome Institute"/>
            <person name="Copeland A."/>
            <person name="Lucas S."/>
            <person name="Lapidus A."/>
            <person name="Glavina del Rio T."/>
            <person name="Dalin E."/>
            <person name="Tice H."/>
            <person name="Bruce D."/>
            <person name="Goodwin L."/>
            <person name="Pitluck S."/>
            <person name="Munk A.C."/>
            <person name="Brettin T."/>
            <person name="Detter J.C."/>
            <person name="Han C."/>
            <person name="Tapia R."/>
            <person name="Schmutz J."/>
            <person name="Larimer F."/>
            <person name="Land M."/>
            <person name="Hauser L."/>
            <person name="Challacombe J.F."/>
            <person name="Green L."/>
            <person name="Lindler L.E."/>
            <person name="Nikolich M.P."/>
            <person name="Richardson P."/>
        </authorList>
    </citation>
    <scope>NUCLEOTIDE SEQUENCE [LARGE SCALE GENOMIC DNA]</scope>
    <source>
        <strain>YPIII</strain>
    </source>
</reference>
<evidence type="ECO:0000255" key="1">
    <source>
        <dbReference type="HAMAP-Rule" id="MF_00780"/>
    </source>
</evidence>
<accession>B1JJW1</accession>